<comment type="function">
    <text evidence="1">The enzymes which catalyze the reversible phosphorolysis of pyrimidine nucleosides are involved in the degradation of these compounds and in their utilization as carbon and energy sources, or in the rescue of pyrimidine bases for nucleotide synthesis.</text>
</comment>
<comment type="catalytic activity">
    <reaction evidence="1">
        <text>thymidine + phosphate = 2-deoxy-alpha-D-ribose 1-phosphate + thymine</text>
        <dbReference type="Rhea" id="RHEA:16037"/>
        <dbReference type="ChEBI" id="CHEBI:17748"/>
        <dbReference type="ChEBI" id="CHEBI:17821"/>
        <dbReference type="ChEBI" id="CHEBI:43474"/>
        <dbReference type="ChEBI" id="CHEBI:57259"/>
        <dbReference type="EC" id="2.4.2.4"/>
    </reaction>
</comment>
<comment type="pathway">
    <text evidence="1">Pyrimidine metabolism; dTMP biosynthesis via salvage pathway; dTMP from thymine: step 1/2.</text>
</comment>
<comment type="subunit">
    <text evidence="1">Homodimer.</text>
</comment>
<comment type="similarity">
    <text evidence="1">Belongs to the thymidine/pyrimidine-nucleoside phosphorylase family.</text>
</comment>
<sequence length="440" mass="45403">MTFLPQEFIRKVRDRAPLDTADVARFVQGVTAGDVTEGQIAAFAMAVYFNELPLSARIALTLAQRDSGDVLDWRGARLNGPVVDKHSTGGVGDLTSLVIGPMVAACGGYVPMISGRGLGHTGGTLDKLEAIPGYDVAPSVDMLRRVVRDAGLAIVGQTAQLAPADKRIYAVRDVTATVESISLITASILSKKLAAGVGALAMDVKVGSGAFMPSAEQSAELARSIVDVGNGAGMRTAATLTDMNQALAPCAGNAIEVRCAIDFLTGAARPARLEAVSFALAAQMLTMGGLAADAHDARRRLRAVLESGAAAERFARMVAALGGPADLVERPERHLPRAAAAAPVAAARAGWIERIDARALGLAVVGLGGGRAKIGDTLDYSVGLSALAELGERVEAGQPLATVHARDADSAAQATDAVRRAYRIGAEPPAQTRVVHAVIE</sequence>
<organism>
    <name type="scientific">Burkholderia mallei (strain ATCC 23344)</name>
    <dbReference type="NCBI Taxonomy" id="243160"/>
    <lineage>
        <taxon>Bacteria</taxon>
        <taxon>Pseudomonadati</taxon>
        <taxon>Pseudomonadota</taxon>
        <taxon>Betaproteobacteria</taxon>
        <taxon>Burkholderiales</taxon>
        <taxon>Burkholderiaceae</taxon>
        <taxon>Burkholderia</taxon>
        <taxon>pseudomallei group</taxon>
    </lineage>
</organism>
<reference key="1">
    <citation type="journal article" date="2004" name="Proc. Natl. Acad. Sci. U.S.A.">
        <title>Structural flexibility in the Burkholderia mallei genome.</title>
        <authorList>
            <person name="Nierman W.C."/>
            <person name="DeShazer D."/>
            <person name="Kim H.S."/>
            <person name="Tettelin H."/>
            <person name="Nelson K.E."/>
            <person name="Feldblyum T.V."/>
            <person name="Ulrich R.L."/>
            <person name="Ronning C.M."/>
            <person name="Brinkac L.M."/>
            <person name="Daugherty S.C."/>
            <person name="Davidsen T.D."/>
            <person name="DeBoy R.T."/>
            <person name="Dimitrov G."/>
            <person name="Dodson R.J."/>
            <person name="Durkin A.S."/>
            <person name="Gwinn M.L."/>
            <person name="Haft D.H."/>
            <person name="Khouri H.M."/>
            <person name="Kolonay J.F."/>
            <person name="Madupu R."/>
            <person name="Mohammoud Y."/>
            <person name="Nelson W.C."/>
            <person name="Radune D."/>
            <person name="Romero C.M."/>
            <person name="Sarria S."/>
            <person name="Selengut J."/>
            <person name="Shamblin C."/>
            <person name="Sullivan S.A."/>
            <person name="White O."/>
            <person name="Yu Y."/>
            <person name="Zafar N."/>
            <person name="Zhou L."/>
            <person name="Fraser C.M."/>
        </authorList>
    </citation>
    <scope>NUCLEOTIDE SEQUENCE [LARGE SCALE GENOMIC DNA]</scope>
    <source>
        <strain>ATCC 23344</strain>
    </source>
</reference>
<dbReference type="EC" id="2.4.2.4" evidence="1"/>
<dbReference type="EMBL" id="CP000011">
    <property type="protein sequence ID" value="AAU46350.1"/>
    <property type="molecule type" value="Genomic_DNA"/>
</dbReference>
<dbReference type="RefSeq" id="WP_004188257.1">
    <property type="nucleotide sequence ID" value="NC_006349.2"/>
</dbReference>
<dbReference type="RefSeq" id="YP_104953.1">
    <property type="nucleotide sequence ID" value="NC_006349.2"/>
</dbReference>
<dbReference type="SMR" id="Q62EC5"/>
<dbReference type="GeneID" id="93064188"/>
<dbReference type="KEGG" id="bma:BMAA0114"/>
<dbReference type="PATRIC" id="fig|243160.12.peg.3606"/>
<dbReference type="eggNOG" id="COG0213">
    <property type="taxonomic scope" value="Bacteria"/>
</dbReference>
<dbReference type="HOGENOM" id="CLU_025040_0_1_4"/>
<dbReference type="UniPathway" id="UPA00578">
    <property type="reaction ID" value="UER00638"/>
</dbReference>
<dbReference type="Proteomes" id="UP000006693">
    <property type="component" value="Chromosome 2"/>
</dbReference>
<dbReference type="GO" id="GO:0005829">
    <property type="term" value="C:cytosol"/>
    <property type="evidence" value="ECO:0007669"/>
    <property type="project" value="TreeGrafter"/>
</dbReference>
<dbReference type="GO" id="GO:0004645">
    <property type="term" value="F:1,4-alpha-oligoglucan phosphorylase activity"/>
    <property type="evidence" value="ECO:0007669"/>
    <property type="project" value="InterPro"/>
</dbReference>
<dbReference type="GO" id="GO:0009032">
    <property type="term" value="F:thymidine phosphorylase activity"/>
    <property type="evidence" value="ECO:0007669"/>
    <property type="project" value="UniProtKB-UniRule"/>
</dbReference>
<dbReference type="GO" id="GO:0006206">
    <property type="term" value="P:pyrimidine nucleobase metabolic process"/>
    <property type="evidence" value="ECO:0007669"/>
    <property type="project" value="InterPro"/>
</dbReference>
<dbReference type="GO" id="GO:0046104">
    <property type="term" value="P:thymidine metabolic process"/>
    <property type="evidence" value="ECO:0007669"/>
    <property type="project" value="UniProtKB-UniRule"/>
</dbReference>
<dbReference type="FunFam" id="3.40.1030.10:FF:000001">
    <property type="entry name" value="Thymidine phosphorylase"/>
    <property type="match status" value="1"/>
</dbReference>
<dbReference type="Gene3D" id="3.40.1030.10">
    <property type="entry name" value="Nucleoside phosphorylase/phosphoribosyltransferase catalytic domain"/>
    <property type="match status" value="1"/>
</dbReference>
<dbReference type="Gene3D" id="3.90.1170.30">
    <property type="entry name" value="Pyrimidine nucleoside phosphorylase-like, C-terminal domain"/>
    <property type="match status" value="1"/>
</dbReference>
<dbReference type="Gene3D" id="1.20.970.10">
    <property type="entry name" value="Transferase, Pyrimidine Nucleoside Phosphorylase, Chain C"/>
    <property type="match status" value="1"/>
</dbReference>
<dbReference type="HAMAP" id="MF_01628">
    <property type="entry name" value="Thymid_phosp"/>
    <property type="match status" value="1"/>
</dbReference>
<dbReference type="InterPro" id="IPR000312">
    <property type="entry name" value="Glycosyl_Trfase_fam3"/>
</dbReference>
<dbReference type="InterPro" id="IPR017459">
    <property type="entry name" value="Glycosyl_Trfase_fam3_N_dom"/>
</dbReference>
<dbReference type="InterPro" id="IPR036320">
    <property type="entry name" value="Glycosyl_Trfase_fam3_N_dom_sf"/>
</dbReference>
<dbReference type="InterPro" id="IPR035902">
    <property type="entry name" value="Nuc_phospho_transferase"/>
</dbReference>
<dbReference type="InterPro" id="IPR036566">
    <property type="entry name" value="PYNP-like_C_sf"/>
</dbReference>
<dbReference type="InterPro" id="IPR013102">
    <property type="entry name" value="PYNP_C"/>
</dbReference>
<dbReference type="InterPro" id="IPR018090">
    <property type="entry name" value="Pyrmidine_PPas_bac/euk"/>
</dbReference>
<dbReference type="InterPro" id="IPR017872">
    <property type="entry name" value="Pyrmidine_PPase_CS"/>
</dbReference>
<dbReference type="InterPro" id="IPR000053">
    <property type="entry name" value="Thymidine/pyrmidine_PPase"/>
</dbReference>
<dbReference type="InterPro" id="IPR013465">
    <property type="entry name" value="Thymidine_Pase"/>
</dbReference>
<dbReference type="NCBIfam" id="NF004490">
    <property type="entry name" value="PRK05820.1"/>
    <property type="match status" value="1"/>
</dbReference>
<dbReference type="NCBIfam" id="TIGR02643">
    <property type="entry name" value="T_phosphoryl"/>
    <property type="match status" value="1"/>
</dbReference>
<dbReference type="NCBIfam" id="TIGR02644">
    <property type="entry name" value="Y_phosphoryl"/>
    <property type="match status" value="1"/>
</dbReference>
<dbReference type="PANTHER" id="PTHR10515">
    <property type="entry name" value="THYMIDINE PHOSPHORYLASE"/>
    <property type="match status" value="1"/>
</dbReference>
<dbReference type="PANTHER" id="PTHR10515:SF0">
    <property type="entry name" value="THYMIDINE PHOSPHORYLASE"/>
    <property type="match status" value="1"/>
</dbReference>
<dbReference type="Pfam" id="PF02885">
    <property type="entry name" value="Glycos_trans_3N"/>
    <property type="match status" value="1"/>
</dbReference>
<dbReference type="Pfam" id="PF00591">
    <property type="entry name" value="Glycos_transf_3"/>
    <property type="match status" value="1"/>
</dbReference>
<dbReference type="Pfam" id="PF07831">
    <property type="entry name" value="PYNP_C"/>
    <property type="match status" value="1"/>
</dbReference>
<dbReference type="PIRSF" id="PIRSF000478">
    <property type="entry name" value="TP_PyNP"/>
    <property type="match status" value="1"/>
</dbReference>
<dbReference type="SMART" id="SM00941">
    <property type="entry name" value="PYNP_C"/>
    <property type="match status" value="1"/>
</dbReference>
<dbReference type="SUPFAM" id="SSF52418">
    <property type="entry name" value="Nucleoside phosphorylase/phosphoribosyltransferase catalytic domain"/>
    <property type="match status" value="1"/>
</dbReference>
<dbReference type="SUPFAM" id="SSF47648">
    <property type="entry name" value="Nucleoside phosphorylase/phosphoribosyltransferase N-terminal domain"/>
    <property type="match status" value="1"/>
</dbReference>
<dbReference type="SUPFAM" id="SSF54680">
    <property type="entry name" value="Pyrimidine nucleoside phosphorylase C-terminal domain"/>
    <property type="match status" value="1"/>
</dbReference>
<dbReference type="PROSITE" id="PS00647">
    <property type="entry name" value="THYMID_PHOSPHORYLASE"/>
    <property type="match status" value="1"/>
</dbReference>
<gene>
    <name evidence="1" type="primary">deoA</name>
    <name type="ordered locus">BMAA0114</name>
</gene>
<proteinExistence type="inferred from homology"/>
<evidence type="ECO:0000255" key="1">
    <source>
        <dbReference type="HAMAP-Rule" id="MF_01628"/>
    </source>
</evidence>
<protein>
    <recommendedName>
        <fullName evidence="1">Thymidine phosphorylase</fullName>
        <ecNumber evidence="1">2.4.2.4</ecNumber>
    </recommendedName>
    <alternativeName>
        <fullName evidence="1">TdRPase</fullName>
    </alternativeName>
</protein>
<keyword id="KW-0328">Glycosyltransferase</keyword>
<keyword id="KW-1185">Reference proteome</keyword>
<keyword id="KW-0808">Transferase</keyword>
<accession>Q62EC5</accession>
<name>TYPH_BURMA</name>
<feature type="chain" id="PRO_0000059049" description="Thymidine phosphorylase">
    <location>
        <begin position="1"/>
        <end position="440"/>
    </location>
</feature>